<organism>
    <name type="scientific">Rattus norvegicus</name>
    <name type="common">Rat</name>
    <dbReference type="NCBI Taxonomy" id="10116"/>
    <lineage>
        <taxon>Eukaryota</taxon>
        <taxon>Metazoa</taxon>
        <taxon>Chordata</taxon>
        <taxon>Craniata</taxon>
        <taxon>Vertebrata</taxon>
        <taxon>Euteleostomi</taxon>
        <taxon>Mammalia</taxon>
        <taxon>Eutheria</taxon>
        <taxon>Euarchontoglires</taxon>
        <taxon>Glires</taxon>
        <taxon>Rodentia</taxon>
        <taxon>Myomorpha</taxon>
        <taxon>Muroidea</taxon>
        <taxon>Muridae</taxon>
        <taxon>Murinae</taxon>
        <taxon>Rattus</taxon>
    </lineage>
</organism>
<evidence type="ECO:0000250" key="1"/>
<evidence type="ECO:0000250" key="2">
    <source>
        <dbReference type="UniProtKB" id="P55271"/>
    </source>
</evidence>
<evidence type="ECO:0000305" key="3"/>
<proteinExistence type="evidence at transcript level"/>
<protein>
    <recommendedName>
        <fullName>Cyclin-dependent kinase 4 inhibitor B</fullName>
    </recommendedName>
    <alternativeName>
        <fullName>p14-INK4b</fullName>
    </alternativeName>
    <alternativeName>
        <fullName>p15-INK4b</fullName>
    </alternativeName>
</protein>
<sequence length="130" mass="13749">MLGGGSDAGLATAAARGQVETVRQLLEAGADPNAVNRFGRRPIQVMMMGSAQVAELLLLHGAEPNCADPATLTRPVHDAAREGFLDTLMVLHKAGARLDVCDAWGRLPVDLAEEQGHRDIARYLHAATGD</sequence>
<reference key="1">
    <citation type="journal article" date="1995" name="Mol. Carcinog.">
        <title>Molecular genetic basis of renal carcinogenesis in the Eker rat model of tuberous sclerosis (Tsc2).</title>
        <authorList>
            <person name="Hino O."/>
            <person name="Kobayashi E."/>
            <person name="Hirayama Y."/>
            <person name="Kobayashi T."/>
            <person name="Kubo Y."/>
            <person name="Tsuchiya H."/>
            <person name="Kikuchi Y."/>
            <person name="Mitani H."/>
        </authorList>
    </citation>
    <scope>NUCLEOTIDE SEQUENCE [MRNA]</scope>
</reference>
<reference key="2">
    <citation type="submission" date="2002-01" db="EMBL/GenBank/DDBJ databases">
        <authorList>
            <person name="Buckles L.K."/>
            <person name="Shull J.D."/>
        </authorList>
    </citation>
    <scope>NUCLEOTIDE SEQUENCE</scope>
    <source>
        <strain>ACI/SegHsd</strain>
        <strain>COP</strain>
        <tissue>Lung</tissue>
    </source>
</reference>
<reference key="3">
    <citation type="journal article" date="1995" name="Cancer Res.">
        <title>Association of rat p15INK4B/p16INK4 deletions with monosomy 5 in kidney epithelial cell lines but not primary renal tumors.</title>
        <authorList>
            <person name="Knapek D.F."/>
            <person name="Serrano M."/>
            <person name="Beach D."/>
            <person name="Trono D."/>
            <person name="Walker C.L."/>
        </authorList>
    </citation>
    <scope>NUCLEOTIDE SEQUENCE [GENOMIC DNA] OF 46-86</scope>
</reference>
<dbReference type="EMBL" id="S79760">
    <property type="protein sequence ID" value="AAB35360.1"/>
    <property type="molecule type" value="mRNA"/>
</dbReference>
<dbReference type="EMBL" id="AF474978">
    <property type="protein sequence ID" value="AAL76340.1"/>
    <property type="molecule type" value="mRNA"/>
</dbReference>
<dbReference type="EMBL" id="AF474979">
    <property type="protein sequence ID" value="AAL76341.1"/>
    <property type="molecule type" value="mRNA"/>
</dbReference>
<dbReference type="EMBL" id="S77734">
    <property type="status" value="NOT_ANNOTATED_CDS"/>
    <property type="molecule type" value="Genomic_DNA"/>
</dbReference>
<dbReference type="RefSeq" id="NP_570825.1">
    <molecule id="P55272-1"/>
    <property type="nucleotide sequence ID" value="NM_130812.5"/>
</dbReference>
<dbReference type="BMRB" id="P55272"/>
<dbReference type="SMR" id="P55272"/>
<dbReference type="FunCoup" id="P55272">
    <property type="interactions" value="389"/>
</dbReference>
<dbReference type="STRING" id="10116.ENSRNOP00000008898"/>
<dbReference type="PhosphoSitePlus" id="P55272"/>
<dbReference type="PaxDb" id="10116-ENSRNOP00000008898"/>
<dbReference type="DNASU" id="25164"/>
<dbReference type="Ensembl" id="ENSRNOT00000100738.1">
    <molecule id="P55272-1"/>
    <property type="protein sequence ID" value="ENSRNOP00000089509.1"/>
    <property type="gene ID" value="ENSRNOG00000006735.6"/>
</dbReference>
<dbReference type="GeneID" id="25164"/>
<dbReference type="KEGG" id="rno:25164"/>
<dbReference type="UCSC" id="RGD:2324">
    <molecule id="P55272-1"/>
    <property type="organism name" value="rat"/>
</dbReference>
<dbReference type="AGR" id="RGD:2324"/>
<dbReference type="CTD" id="1030"/>
<dbReference type="RGD" id="2324">
    <property type="gene designation" value="Cdkn2b"/>
</dbReference>
<dbReference type="eggNOG" id="KOG0504">
    <property type="taxonomic scope" value="Eukaryota"/>
</dbReference>
<dbReference type="GeneTree" id="ENSGT00940000162423"/>
<dbReference type="InParanoid" id="P55272"/>
<dbReference type="OMA" id="SALQVMM"/>
<dbReference type="OrthoDB" id="539213at2759"/>
<dbReference type="PhylomeDB" id="P55272"/>
<dbReference type="TreeFam" id="TF352389"/>
<dbReference type="Reactome" id="R-RNO-2559580">
    <property type="pathway name" value="Oxidative Stress Induced Senescence"/>
</dbReference>
<dbReference type="Reactome" id="R-RNO-2559582">
    <property type="pathway name" value="Senescence-Associated Secretory Phenotype (SASP)"/>
</dbReference>
<dbReference type="Reactome" id="R-RNO-2559585">
    <property type="pathway name" value="Oncogene Induced Senescence"/>
</dbReference>
<dbReference type="Reactome" id="R-RNO-69231">
    <property type="pathway name" value="Cyclin D associated events in G1"/>
</dbReference>
<dbReference type="PRO" id="PR:P55272"/>
<dbReference type="Proteomes" id="UP000002494">
    <property type="component" value="Chromosome 5"/>
</dbReference>
<dbReference type="GO" id="GO:0005737">
    <property type="term" value="C:cytoplasm"/>
    <property type="evidence" value="ECO:0000266"/>
    <property type="project" value="RGD"/>
</dbReference>
<dbReference type="GO" id="GO:0005634">
    <property type="term" value="C:nucleus"/>
    <property type="evidence" value="ECO:0000266"/>
    <property type="project" value="RGD"/>
</dbReference>
<dbReference type="GO" id="GO:0004861">
    <property type="term" value="F:cyclin-dependent protein serine/threonine kinase inhibitor activity"/>
    <property type="evidence" value="ECO:0000266"/>
    <property type="project" value="RGD"/>
</dbReference>
<dbReference type="GO" id="GO:0019901">
    <property type="term" value="F:protein kinase binding"/>
    <property type="evidence" value="ECO:0000266"/>
    <property type="project" value="RGD"/>
</dbReference>
<dbReference type="GO" id="GO:0071460">
    <property type="term" value="P:cellular response to cell-matrix adhesion"/>
    <property type="evidence" value="ECO:0000266"/>
    <property type="project" value="RGD"/>
</dbReference>
<dbReference type="GO" id="GO:0031670">
    <property type="term" value="P:cellular response to nutrient"/>
    <property type="evidence" value="ECO:0000266"/>
    <property type="project" value="RGD"/>
</dbReference>
<dbReference type="GO" id="GO:0071560">
    <property type="term" value="P:cellular response to transforming growth factor beta stimulus"/>
    <property type="evidence" value="ECO:0000270"/>
    <property type="project" value="RGD"/>
</dbReference>
<dbReference type="GO" id="GO:0090398">
    <property type="term" value="P:cellular senescence"/>
    <property type="evidence" value="ECO:0000266"/>
    <property type="project" value="RGD"/>
</dbReference>
<dbReference type="GO" id="GO:0001889">
    <property type="term" value="P:liver development"/>
    <property type="evidence" value="ECO:0000270"/>
    <property type="project" value="RGD"/>
</dbReference>
<dbReference type="GO" id="GO:0030219">
    <property type="term" value="P:megakaryocyte differentiation"/>
    <property type="evidence" value="ECO:0000266"/>
    <property type="project" value="RGD"/>
</dbReference>
<dbReference type="GO" id="GO:1902807">
    <property type="term" value="P:negative regulation of cell cycle G1/S phase transition"/>
    <property type="evidence" value="ECO:0000315"/>
    <property type="project" value="RGD"/>
</dbReference>
<dbReference type="GO" id="GO:0008285">
    <property type="term" value="P:negative regulation of cell population proliferation"/>
    <property type="evidence" value="ECO:0000315"/>
    <property type="project" value="RGD"/>
</dbReference>
<dbReference type="GO" id="GO:0050680">
    <property type="term" value="P:negative regulation of epithelial cell proliferation"/>
    <property type="evidence" value="ECO:0000266"/>
    <property type="project" value="RGD"/>
</dbReference>
<dbReference type="GO" id="GO:2000134">
    <property type="term" value="P:negative regulation of G1/S transition of mitotic cell cycle"/>
    <property type="evidence" value="ECO:0000266"/>
    <property type="project" value="RGD"/>
</dbReference>
<dbReference type="GO" id="GO:0060253">
    <property type="term" value="P:negative regulation of glial cell proliferation"/>
    <property type="evidence" value="ECO:0000315"/>
    <property type="project" value="RGD"/>
</dbReference>
<dbReference type="GO" id="GO:0030858">
    <property type="term" value="P:positive regulation of epithelial cell differentiation"/>
    <property type="evidence" value="ECO:0000270"/>
    <property type="project" value="RGD"/>
</dbReference>
<dbReference type="GO" id="GO:0030511">
    <property type="term" value="P:positive regulation of transforming growth factor beta receptor signaling pathway"/>
    <property type="evidence" value="ECO:0000266"/>
    <property type="project" value="RGD"/>
</dbReference>
<dbReference type="GO" id="GO:0070316">
    <property type="term" value="P:regulation of G0 to G1 transition"/>
    <property type="evidence" value="ECO:0000266"/>
    <property type="project" value="RGD"/>
</dbReference>
<dbReference type="GO" id="GO:2000045">
    <property type="term" value="P:regulation of G1/S transition of mitotic cell cycle"/>
    <property type="evidence" value="ECO:0000318"/>
    <property type="project" value="GO_Central"/>
</dbReference>
<dbReference type="GO" id="GO:0034097">
    <property type="term" value="P:response to cytokine"/>
    <property type="evidence" value="ECO:0000270"/>
    <property type="project" value="RGD"/>
</dbReference>
<dbReference type="GO" id="GO:0048536">
    <property type="term" value="P:spleen development"/>
    <property type="evidence" value="ECO:0000266"/>
    <property type="project" value="RGD"/>
</dbReference>
<dbReference type="FunFam" id="1.25.40.20:FF:000107">
    <property type="entry name" value="cyclin-dependent kinase 4 inhibitor B"/>
    <property type="match status" value="1"/>
</dbReference>
<dbReference type="Gene3D" id="1.25.40.20">
    <property type="entry name" value="Ankyrin repeat-containing domain"/>
    <property type="match status" value="1"/>
</dbReference>
<dbReference type="InterPro" id="IPR050776">
    <property type="entry name" value="Ank_Repeat/CDKN_Inhibitor"/>
</dbReference>
<dbReference type="InterPro" id="IPR002110">
    <property type="entry name" value="Ankyrin_rpt"/>
</dbReference>
<dbReference type="InterPro" id="IPR036770">
    <property type="entry name" value="Ankyrin_rpt-contain_sf"/>
</dbReference>
<dbReference type="PANTHER" id="PTHR24201">
    <property type="entry name" value="ANK_REP_REGION DOMAIN-CONTAINING PROTEIN"/>
    <property type="match status" value="1"/>
</dbReference>
<dbReference type="PANTHER" id="PTHR24201:SF8">
    <property type="entry name" value="CYCLIN-DEPENDENT KINASE 4 INHIBITOR B"/>
    <property type="match status" value="1"/>
</dbReference>
<dbReference type="Pfam" id="PF00023">
    <property type="entry name" value="Ank"/>
    <property type="match status" value="1"/>
</dbReference>
<dbReference type="Pfam" id="PF12796">
    <property type="entry name" value="Ank_2"/>
    <property type="match status" value="1"/>
</dbReference>
<dbReference type="SMART" id="SM00248">
    <property type="entry name" value="ANK"/>
    <property type="match status" value="3"/>
</dbReference>
<dbReference type="SUPFAM" id="SSF48403">
    <property type="entry name" value="Ankyrin repeat"/>
    <property type="match status" value="1"/>
</dbReference>
<dbReference type="PROSITE" id="PS50297">
    <property type="entry name" value="ANK_REP_REGION"/>
    <property type="match status" value="1"/>
</dbReference>
<dbReference type="PROSITE" id="PS50088">
    <property type="entry name" value="ANK_REPEAT"/>
    <property type="match status" value="1"/>
</dbReference>
<accession>P55272</accession>
<comment type="function">
    <text evidence="1">Interacts strongly with CDK4 and CDK6. Potent inhibitor. Potential effector of TGF-beta induced cell cycle arrest (By similarity).</text>
</comment>
<comment type="subunit">
    <text>Heterodimer of CDKN2B with CDK4 or CDK6.</text>
</comment>
<comment type="alternative products">
    <event type="alternative initiation"/>
    <isoform>
        <id>P55272-1</id>
        <name>Long</name>
        <sequence type="displayed"/>
    </isoform>
    <isoform>
        <id>P55272-2</id>
        <name>Short</name>
        <sequence type="described" ref="VSP_018702"/>
    </isoform>
</comment>
<comment type="tissue specificity">
    <text>Expression abundant in lung, less abundant in testis, barely detectable in liver, and not detectable in neonatal kidney, adult kidney, brain, heart, or spleen.</text>
</comment>
<comment type="similarity">
    <text evidence="3">Belongs to the CDKN2 cyclin-dependent kinase inhibitor family.</text>
</comment>
<gene>
    <name type="primary">Cdkn2b</name>
    <name type="synonym">Ink4</name>
</gene>
<feature type="chain" id="PRO_0000004808" description="Cyclin-dependent kinase 4 inhibitor B">
    <location>
        <begin position="1"/>
        <end position="130"/>
    </location>
</feature>
<feature type="repeat" description="ANK 1">
    <location>
        <begin position="5"/>
        <end position="34"/>
    </location>
</feature>
<feature type="repeat" description="ANK 2">
    <location>
        <begin position="38"/>
        <end position="66"/>
    </location>
</feature>
<feature type="repeat" description="ANK 3">
    <location>
        <begin position="71"/>
        <end position="100"/>
    </location>
</feature>
<feature type="repeat" description="ANK 4">
    <location>
        <begin position="104"/>
        <end position="130"/>
    </location>
</feature>
<feature type="modified residue" description="Phosphothreonine" evidence="2">
    <location>
        <position position="12"/>
    </location>
</feature>
<feature type="splice variant" id="VSP_018702" description="In isoform Short." evidence="3">
    <location>
        <begin position="1"/>
        <end position="45"/>
    </location>
</feature>
<name>CDN2B_RAT</name>
<keyword id="KW-0024">Alternative initiation</keyword>
<keyword id="KW-0040">ANK repeat</keyword>
<keyword id="KW-0131">Cell cycle</keyword>
<keyword id="KW-0597">Phosphoprotein</keyword>
<keyword id="KW-1185">Reference proteome</keyword>
<keyword id="KW-0677">Repeat</keyword>
<keyword id="KW-0043">Tumor suppressor</keyword>